<keyword id="KW-0548">Nucleotidyltransferase</keyword>
<keyword id="KW-1185">Reference proteome</keyword>
<keyword id="KW-0694">RNA-binding</keyword>
<keyword id="KW-0698">rRNA processing</keyword>
<keyword id="KW-0808">Transferase</keyword>
<keyword id="KW-0819">tRNA processing</keyword>
<keyword id="KW-0820">tRNA-binding</keyword>
<evidence type="ECO:0000255" key="1">
    <source>
        <dbReference type="HAMAP-Rule" id="MF_00564"/>
    </source>
</evidence>
<reference key="1">
    <citation type="journal article" date="2002" name="Genome Res.">
        <title>A complete sequence of the T. tengcongensis genome.</title>
        <authorList>
            <person name="Bao Q."/>
            <person name="Tian Y."/>
            <person name="Li W."/>
            <person name="Xu Z."/>
            <person name="Xuan Z."/>
            <person name="Hu S."/>
            <person name="Dong W."/>
            <person name="Yang J."/>
            <person name="Chen Y."/>
            <person name="Xue Y."/>
            <person name="Xu Y."/>
            <person name="Lai X."/>
            <person name="Huang L."/>
            <person name="Dong X."/>
            <person name="Ma Y."/>
            <person name="Ling L."/>
            <person name="Tan H."/>
            <person name="Chen R."/>
            <person name="Wang J."/>
            <person name="Yu J."/>
            <person name="Yang H."/>
        </authorList>
    </citation>
    <scope>NUCLEOTIDE SEQUENCE [LARGE SCALE GENOMIC DNA]</scope>
    <source>
        <strain>DSM 15242 / JCM 11007 / NBRC 100824 / MB4</strain>
    </source>
</reference>
<name>RNPH_CALS4</name>
<organism>
    <name type="scientific">Caldanaerobacter subterraneus subsp. tengcongensis (strain DSM 15242 / JCM 11007 / NBRC 100824 / MB4)</name>
    <name type="common">Thermoanaerobacter tengcongensis</name>
    <dbReference type="NCBI Taxonomy" id="273068"/>
    <lineage>
        <taxon>Bacteria</taxon>
        <taxon>Bacillati</taxon>
        <taxon>Bacillota</taxon>
        <taxon>Clostridia</taxon>
        <taxon>Thermoanaerobacterales</taxon>
        <taxon>Thermoanaerobacteraceae</taxon>
        <taxon>Caldanaerobacter</taxon>
    </lineage>
</organism>
<protein>
    <recommendedName>
        <fullName evidence="1">Ribonuclease PH</fullName>
        <shortName evidence="1">RNase PH</shortName>
        <ecNumber evidence="1">2.7.7.56</ecNumber>
    </recommendedName>
    <alternativeName>
        <fullName evidence="1">tRNA nucleotidyltransferase</fullName>
    </alternativeName>
</protein>
<proteinExistence type="inferred from homology"/>
<comment type="function">
    <text evidence="1">Phosphorolytic 3'-5' exoribonuclease that plays an important role in tRNA 3'-end maturation. Removes nucleotide residues following the 3'-CCA terminus of tRNAs; can also add nucleotides to the ends of RNA molecules by using nucleoside diphosphates as substrates, but this may not be physiologically important. Probably plays a role in initiation of 16S rRNA degradation (leading to ribosome degradation) during starvation.</text>
</comment>
<comment type="catalytic activity">
    <reaction evidence="1">
        <text>tRNA(n+1) + phosphate = tRNA(n) + a ribonucleoside 5'-diphosphate</text>
        <dbReference type="Rhea" id="RHEA:10628"/>
        <dbReference type="Rhea" id="RHEA-COMP:17343"/>
        <dbReference type="Rhea" id="RHEA-COMP:17344"/>
        <dbReference type="ChEBI" id="CHEBI:43474"/>
        <dbReference type="ChEBI" id="CHEBI:57930"/>
        <dbReference type="ChEBI" id="CHEBI:173114"/>
        <dbReference type="EC" id="2.7.7.56"/>
    </reaction>
</comment>
<comment type="subunit">
    <text evidence="1">Homohexameric ring arranged as a trimer of dimers.</text>
</comment>
<comment type="similarity">
    <text evidence="1">Belongs to the RNase PH family.</text>
</comment>
<gene>
    <name evidence="1" type="primary">rph</name>
    <name type="ordered locus">TTE0618</name>
</gene>
<sequence>MNRIDGREFNELRPIKITRNFNKFAEGSVLIEMGETKVICTASIEDKVPPFQKGTGKGWITSEYGMLPRATEVRNPREVTKGRPSGRTMEIQRLIGRSLRAVVDLEALGERTIWIDCDVIQADGGTRTASITGSFIALADALNKLVEKGELQKIPLKSFVAAVSVGIVEGNKLLDLSFQEDANALVDMNVVMTDKGEIVEIQGTGEGGPFSRQNFEELLDLAAHGIEQIIKIQKEVLSDIADKIGVENVEVDSGNSQSQQG</sequence>
<accession>Q8RC30</accession>
<dbReference type="EC" id="2.7.7.56" evidence="1"/>
<dbReference type="EMBL" id="AE008691">
    <property type="protein sequence ID" value="AAM23888.1"/>
    <property type="molecule type" value="Genomic_DNA"/>
</dbReference>
<dbReference type="RefSeq" id="WP_011025033.1">
    <property type="nucleotide sequence ID" value="NZ_JANUCV010000001.1"/>
</dbReference>
<dbReference type="SMR" id="Q8RC30"/>
<dbReference type="STRING" id="273068.TTE0618"/>
<dbReference type="KEGG" id="tte:TTE0618"/>
<dbReference type="eggNOG" id="COG0689">
    <property type="taxonomic scope" value="Bacteria"/>
</dbReference>
<dbReference type="HOGENOM" id="CLU_050858_0_0_9"/>
<dbReference type="OrthoDB" id="9807456at2"/>
<dbReference type="Proteomes" id="UP000000555">
    <property type="component" value="Chromosome"/>
</dbReference>
<dbReference type="GO" id="GO:0000175">
    <property type="term" value="F:3'-5'-RNA exonuclease activity"/>
    <property type="evidence" value="ECO:0007669"/>
    <property type="project" value="UniProtKB-UniRule"/>
</dbReference>
<dbReference type="GO" id="GO:0000049">
    <property type="term" value="F:tRNA binding"/>
    <property type="evidence" value="ECO:0007669"/>
    <property type="project" value="UniProtKB-UniRule"/>
</dbReference>
<dbReference type="GO" id="GO:0009022">
    <property type="term" value="F:tRNA nucleotidyltransferase activity"/>
    <property type="evidence" value="ECO:0007669"/>
    <property type="project" value="UniProtKB-UniRule"/>
</dbReference>
<dbReference type="GO" id="GO:0016075">
    <property type="term" value="P:rRNA catabolic process"/>
    <property type="evidence" value="ECO:0007669"/>
    <property type="project" value="UniProtKB-UniRule"/>
</dbReference>
<dbReference type="GO" id="GO:0006364">
    <property type="term" value="P:rRNA processing"/>
    <property type="evidence" value="ECO:0007669"/>
    <property type="project" value="UniProtKB-KW"/>
</dbReference>
<dbReference type="GO" id="GO:0008033">
    <property type="term" value="P:tRNA processing"/>
    <property type="evidence" value="ECO:0007669"/>
    <property type="project" value="UniProtKB-UniRule"/>
</dbReference>
<dbReference type="CDD" id="cd11362">
    <property type="entry name" value="RNase_PH_bact"/>
    <property type="match status" value="1"/>
</dbReference>
<dbReference type="FunFam" id="3.30.230.70:FF:000003">
    <property type="entry name" value="Ribonuclease PH"/>
    <property type="match status" value="1"/>
</dbReference>
<dbReference type="Gene3D" id="3.30.230.70">
    <property type="entry name" value="GHMP Kinase, N-terminal domain"/>
    <property type="match status" value="1"/>
</dbReference>
<dbReference type="HAMAP" id="MF_00564">
    <property type="entry name" value="RNase_PH"/>
    <property type="match status" value="1"/>
</dbReference>
<dbReference type="InterPro" id="IPR001247">
    <property type="entry name" value="ExoRNase_PH_dom1"/>
</dbReference>
<dbReference type="InterPro" id="IPR015847">
    <property type="entry name" value="ExoRNase_PH_dom2"/>
</dbReference>
<dbReference type="InterPro" id="IPR036345">
    <property type="entry name" value="ExoRNase_PH_dom2_sf"/>
</dbReference>
<dbReference type="InterPro" id="IPR027408">
    <property type="entry name" value="PNPase/RNase_PH_dom_sf"/>
</dbReference>
<dbReference type="InterPro" id="IPR020568">
    <property type="entry name" value="Ribosomal_Su5_D2-typ_SF"/>
</dbReference>
<dbReference type="InterPro" id="IPR050080">
    <property type="entry name" value="RNase_PH"/>
</dbReference>
<dbReference type="InterPro" id="IPR002381">
    <property type="entry name" value="RNase_PH_bac-type"/>
</dbReference>
<dbReference type="InterPro" id="IPR018336">
    <property type="entry name" value="RNase_PH_CS"/>
</dbReference>
<dbReference type="NCBIfam" id="TIGR01966">
    <property type="entry name" value="RNasePH"/>
    <property type="match status" value="1"/>
</dbReference>
<dbReference type="PANTHER" id="PTHR11953">
    <property type="entry name" value="EXOSOME COMPLEX COMPONENT"/>
    <property type="match status" value="1"/>
</dbReference>
<dbReference type="PANTHER" id="PTHR11953:SF0">
    <property type="entry name" value="EXOSOME COMPLEX COMPONENT RRP41"/>
    <property type="match status" value="1"/>
</dbReference>
<dbReference type="Pfam" id="PF01138">
    <property type="entry name" value="RNase_PH"/>
    <property type="match status" value="1"/>
</dbReference>
<dbReference type="Pfam" id="PF03725">
    <property type="entry name" value="RNase_PH_C"/>
    <property type="match status" value="1"/>
</dbReference>
<dbReference type="SUPFAM" id="SSF55666">
    <property type="entry name" value="Ribonuclease PH domain 2-like"/>
    <property type="match status" value="1"/>
</dbReference>
<dbReference type="SUPFAM" id="SSF54211">
    <property type="entry name" value="Ribosomal protein S5 domain 2-like"/>
    <property type="match status" value="1"/>
</dbReference>
<dbReference type="PROSITE" id="PS01277">
    <property type="entry name" value="RIBONUCLEASE_PH"/>
    <property type="match status" value="1"/>
</dbReference>
<feature type="chain" id="PRO_0000139944" description="Ribonuclease PH">
    <location>
        <begin position="1"/>
        <end position="261"/>
    </location>
</feature>
<feature type="binding site" evidence="1">
    <location>
        <position position="87"/>
    </location>
    <ligand>
        <name>phosphate</name>
        <dbReference type="ChEBI" id="CHEBI:43474"/>
        <note>substrate</note>
    </ligand>
</feature>
<feature type="binding site" evidence="1">
    <location>
        <begin position="125"/>
        <end position="127"/>
    </location>
    <ligand>
        <name>phosphate</name>
        <dbReference type="ChEBI" id="CHEBI:43474"/>
        <note>substrate</note>
    </ligand>
</feature>